<evidence type="ECO:0000250" key="1">
    <source>
        <dbReference type="UniProtKB" id="P71079"/>
    </source>
</evidence>
<evidence type="ECO:0000269" key="2">
    <source>
    </source>
</evidence>
<evidence type="ECO:0000269" key="3">
    <source>
    </source>
</evidence>
<evidence type="ECO:0000269" key="4">
    <source>
    </source>
</evidence>
<evidence type="ECO:0000303" key="5">
    <source>
    </source>
</evidence>
<evidence type="ECO:0000303" key="6">
    <source>
    </source>
</evidence>
<evidence type="ECO:0000305" key="7"/>
<evidence type="ECO:0000305" key="8">
    <source>
    </source>
</evidence>
<comment type="function">
    <text evidence="2 3 4">Involved in the biosynthesis of the antifungal antibiotic ansatrienin A (mycotrienin I) (PubMed:1597409, PubMed:8955309). Catalyzes three of the reductive steps involved in the formation of the cyclohexanecarboxylic acid (CHC) moiety of ansatrienin from shikimic acid (PubMed:8955309). Can use 3,4-dihydroxycyclohexa-1,5-diene-1-carbonyl-CoA, 5-hydroxycyclohex-1-ene-1-carbonyl-CoA and cyclohex-1-ene-1-carbonyl-CoA as substrates (PubMed:10973220, PubMed:1597409, PubMed:8955309).</text>
</comment>
<comment type="catalytic activity">
    <reaction evidence="4">
        <text>(4R,5R)-4,5-dihydroxycyclohex-2-ene-1-carbonyl-CoA + NADP(+) = (3R,4R)-3,4-dihydroxycyclohexa-1,5-diene-1-carbonyl-CoA + NADPH + H(+)</text>
        <dbReference type="Rhea" id="RHEA:61576"/>
        <dbReference type="ChEBI" id="CHEBI:15378"/>
        <dbReference type="ChEBI" id="CHEBI:57783"/>
        <dbReference type="ChEBI" id="CHEBI:58349"/>
        <dbReference type="ChEBI" id="CHEBI:144823"/>
        <dbReference type="ChEBI" id="CHEBI:144824"/>
        <dbReference type="EC" id="1.3.1.120"/>
    </reaction>
    <physiologicalReaction direction="right-to-left" evidence="4">
        <dbReference type="Rhea" id="RHEA:61578"/>
    </physiologicalReaction>
</comment>
<comment type="catalytic activity">
    <reaction evidence="4">
        <text>(3S)-3-hydroxycyclohexane-1-carbonyl-CoA + NADP(+) = (5S)-5-hydroxycyclohex-1-ene-1-carbonyl-CoA + NADPH + H(+)</text>
        <dbReference type="Rhea" id="RHEA:61580"/>
        <dbReference type="ChEBI" id="CHEBI:15378"/>
        <dbReference type="ChEBI" id="CHEBI:57783"/>
        <dbReference type="ChEBI" id="CHEBI:58349"/>
        <dbReference type="ChEBI" id="CHEBI:144830"/>
        <dbReference type="ChEBI" id="CHEBI:144831"/>
        <dbReference type="EC" id="1.3.1.120"/>
    </reaction>
    <physiologicalReaction direction="right-to-left" evidence="4">
        <dbReference type="Rhea" id="RHEA:61582"/>
    </physiologicalReaction>
</comment>
<comment type="catalytic activity">
    <reaction evidence="2 3 4">
        <text>cyclohexane-1-carbonyl-CoA + NADP(+) = cyclohex-1-ene-1-carbonyl-CoA + NADPH + H(+)</text>
        <dbReference type="Rhea" id="RHEA:59988"/>
        <dbReference type="ChEBI" id="CHEBI:15378"/>
        <dbReference type="ChEBI" id="CHEBI:57783"/>
        <dbReference type="ChEBI" id="CHEBI:58349"/>
        <dbReference type="ChEBI" id="CHEBI:76270"/>
        <dbReference type="ChEBI" id="CHEBI:76271"/>
        <dbReference type="EC" id="1.3.1.120"/>
    </reaction>
    <physiologicalReaction direction="right-to-left" evidence="2 3 4">
        <dbReference type="Rhea" id="RHEA:59990"/>
    </physiologicalReaction>
</comment>
<comment type="activity regulation">
    <text evidence="3">Inhibited by the thiol inhibitors p-chloromercuribenzoate, N-ethylmaleimide and iodoacetamide. Also inhibited by various divalent cations.</text>
</comment>
<comment type="biophysicochemical properties">
    <kinetics>
        <KM evidence="3">1.5 uM for NADPH</KM>
        <KM evidence="4">30 uM for 5-hydroxycyclohex-1-ene-1-carbonyl-CoA</KM>
        <KM evidence="3 4">25 uM for cyclohex-1-ene-1-carbonyl-CoA</KM>
        <Vmax evidence="4">5.3 umol/min/mg enzyme with 5-hydroxycyclohex-1-ene-1-carbonyl-CoA as substrate</Vmax>
        <Vmax evidence="4">7.5 umol/min/mg enzyme with cyclohex-1-ene-1-carbonyl-CoA as substrate</Vmax>
    </kinetics>
    <phDependence>
        <text evidence="3">Optimum pH is 7.5.</text>
    </phDependence>
    <temperatureDependence>
        <text evidence="3">Optimum temperature is 30 degrees Celsius.</text>
    </temperatureDependence>
</comment>
<comment type="pathway">
    <text evidence="4 8">Antibiotic biosynthesis.</text>
</comment>
<comment type="subunit">
    <text evidence="3 4">Homodimer.</text>
</comment>
<comment type="disruption phenotype">
    <text evidence="4">Deletion mutant loses the ability to synthesize either cyclohexanecarboxylic acid or ansatrienin.</text>
</comment>
<comment type="similarity">
    <text evidence="7">Belongs to the short-chain dehydrogenases/reductases (SDR) family.</text>
</comment>
<gene>
    <name evidence="6" type="primary">chcA</name>
</gene>
<keyword id="KW-0045">Antibiotic biosynthesis</keyword>
<keyword id="KW-0903">Direct protein sequencing</keyword>
<keyword id="KW-0521">NADP</keyword>
<keyword id="KW-0560">Oxidoreductase</keyword>
<feature type="chain" id="PRO_0000450124" description="1-cyclohexenylcarbonyl-CoA reductase">
    <location>
        <begin position="1"/>
        <end position="280"/>
    </location>
</feature>
<feature type="active site" description="Proton acceptor" evidence="1">
    <location>
        <position position="158"/>
    </location>
</feature>
<feature type="active site" description="Proton acceptor" evidence="1">
    <location>
        <position position="165"/>
    </location>
</feature>
<feature type="binding site" evidence="1">
    <location>
        <begin position="22"/>
        <end position="25"/>
    </location>
    <ligand>
        <name>NADP(+)</name>
        <dbReference type="ChEBI" id="CHEBI:58349"/>
    </ligand>
</feature>
<feature type="binding site" evidence="1">
    <location>
        <begin position="71"/>
        <end position="72"/>
    </location>
    <ligand>
        <name>NADP(+)</name>
        <dbReference type="ChEBI" id="CHEBI:58349"/>
    </ligand>
</feature>
<feature type="binding site" evidence="1">
    <location>
        <position position="98"/>
    </location>
    <ligand>
        <name>NADP(+)</name>
        <dbReference type="ChEBI" id="CHEBI:58349"/>
    </ligand>
</feature>
<feature type="binding site" evidence="1">
    <location>
        <position position="165"/>
    </location>
    <ligand>
        <name>NADP(+)</name>
        <dbReference type="ChEBI" id="CHEBI:58349"/>
    </ligand>
</feature>
<feature type="binding site" evidence="1">
    <location>
        <begin position="194"/>
        <end position="196"/>
    </location>
    <ligand>
        <name>NADP(+)</name>
        <dbReference type="ChEBI" id="CHEBI:58349"/>
    </ligand>
</feature>
<dbReference type="EC" id="1.3.1.120" evidence="2 3 4"/>
<dbReference type="EMBL" id="U72144">
    <property type="protein sequence ID" value="AAC44655.1"/>
    <property type="molecule type" value="Genomic_DNA"/>
</dbReference>
<dbReference type="SMR" id="P95727"/>
<dbReference type="KEGG" id="ag:AAC44655"/>
<dbReference type="BioCyc" id="MetaCyc:MONOMER-20782"/>
<dbReference type="BRENDA" id="1.3.1.120">
    <property type="organism ID" value="6000"/>
</dbReference>
<dbReference type="SABIO-RK" id="P95727"/>
<dbReference type="GO" id="GO:0016491">
    <property type="term" value="F:oxidoreductase activity"/>
    <property type="evidence" value="ECO:0007669"/>
    <property type="project" value="UniProtKB-KW"/>
</dbReference>
<dbReference type="GO" id="GO:0017000">
    <property type="term" value="P:antibiotic biosynthetic process"/>
    <property type="evidence" value="ECO:0007669"/>
    <property type="project" value="UniProtKB-KW"/>
</dbReference>
<dbReference type="CDD" id="cd05359">
    <property type="entry name" value="ChcA_like_SDR_c"/>
    <property type="match status" value="1"/>
</dbReference>
<dbReference type="FunFam" id="3.40.50.720:FF:000084">
    <property type="entry name" value="Short-chain dehydrogenase reductase"/>
    <property type="match status" value="1"/>
</dbReference>
<dbReference type="Gene3D" id="3.40.50.720">
    <property type="entry name" value="NAD(P)-binding Rossmann-like Domain"/>
    <property type="match status" value="1"/>
</dbReference>
<dbReference type="InterPro" id="IPR036291">
    <property type="entry name" value="NAD(P)-bd_dom_sf"/>
</dbReference>
<dbReference type="InterPro" id="IPR002347">
    <property type="entry name" value="SDR_fam"/>
</dbReference>
<dbReference type="PANTHER" id="PTHR43639">
    <property type="entry name" value="OXIDOREDUCTASE, SHORT-CHAIN DEHYDROGENASE/REDUCTASE FAMILY (AFU_ORTHOLOGUE AFUA_5G02870)"/>
    <property type="match status" value="1"/>
</dbReference>
<dbReference type="PANTHER" id="PTHR43639:SF1">
    <property type="entry name" value="SHORT-CHAIN DEHYDROGENASE_REDUCTASE FAMILY PROTEIN"/>
    <property type="match status" value="1"/>
</dbReference>
<dbReference type="Pfam" id="PF13561">
    <property type="entry name" value="adh_short_C2"/>
    <property type="match status" value="1"/>
</dbReference>
<dbReference type="PRINTS" id="PR00081">
    <property type="entry name" value="GDHRDH"/>
</dbReference>
<dbReference type="SUPFAM" id="SSF51735">
    <property type="entry name" value="NAD(P)-binding Rossmann-fold domains"/>
    <property type="match status" value="1"/>
</dbReference>
<protein>
    <recommendedName>
        <fullName evidence="5">1-cyclohexenylcarbonyl-CoA reductase</fullName>
        <ecNumber evidence="2 3 4">1.3.1.120</ecNumber>
    </recommendedName>
    <alternativeName>
        <fullName evidence="7">Cyclohexane-1-carbonyl-CoA reductase (NADP(+))</fullName>
    </alternativeName>
</protein>
<name>CHCA_STRCU</name>
<organism>
    <name type="scientific">Streptomyces collinus</name>
    <dbReference type="NCBI Taxonomy" id="42684"/>
    <lineage>
        <taxon>Bacteria</taxon>
        <taxon>Bacillati</taxon>
        <taxon>Actinomycetota</taxon>
        <taxon>Actinomycetes</taxon>
        <taxon>Kitasatosporales</taxon>
        <taxon>Streptomycetaceae</taxon>
        <taxon>Streptomyces</taxon>
    </lineage>
</organism>
<accession>P95727</accession>
<proteinExistence type="evidence at protein level"/>
<sequence length="280" mass="29849">MNSPHQQQTADRRQVSLITGASRGIGRTLALTLARRGGTVVVNYKKNADLAQKTVAEVEEAGGQGFAVQADVETTEGVTALFDEVAQRCGRLDHFVSNAAASAFKNIVDLGPHHLDRSYAMNLRPFVLGAQQAVKLMDNGGRIVALSSYGSVRAYPTYAMLGGMKAAIESWVRYMAVEFAPYGINVNAVNGGLIDSDSLEFFYNVEGMPPMQGVLDRIPARRPGTVQEMADTIAFLLGDGAGYITGQTLVVDGGLSIVAPPFFADAGEALELPPRPTRDA</sequence>
<reference key="1">
    <citation type="journal article" date="1996" name="J. Bacteriol.">
        <title>Cloning and characterization of the gene encoding 1-cyclohexenylcarbonyl coenzyme A reductase from Streptomyces collinus.</title>
        <authorList>
            <person name="Wang P."/>
            <person name="Denoya C.D."/>
            <person name="Morgenstern M.R."/>
            <person name="Skinner D.D."/>
            <person name="Wallace K.K."/>
            <person name="Digate R."/>
            <person name="Patton S."/>
            <person name="Banavali N."/>
            <person name="Schuler G."/>
            <person name="Speedie M.K."/>
            <person name="Reynolds K.A."/>
        </authorList>
    </citation>
    <scope>NUCLEOTIDE SEQUENCE [GENOMIC DNA]</scope>
    <scope>FUNCTION</scope>
    <scope>CATALYTIC ACTIVITY</scope>
    <scope>BIOPHYSICOCHEMICAL PROPERTIES</scope>
    <scope>PATHWAY</scope>
    <scope>SUBUNIT</scope>
    <scope>DISRUPTION PHENOTYPE</scope>
    <source>
        <strain>Tu 1892</strain>
    </source>
</reference>
<reference key="2">
    <citation type="journal article" date="1992" name="J. Bacteriol.">
        <title>Purification and characterization of a novel enoyl coenzyme A reductase from Streptomyces collinus.</title>
        <authorList>
            <person name="Reynolds K.A."/>
            <person name="Wang P."/>
            <person name="Fox K.M."/>
            <person name="Speedie M.K."/>
            <person name="Lam Y."/>
            <person name="Floss H.G."/>
        </authorList>
    </citation>
    <scope>PROTEIN SEQUENCE OF 106-117 AND 143-153</scope>
    <scope>FUNCTION</scope>
    <scope>CATALYTIC ACTIVITY</scope>
    <scope>ACTIVITY REGULATION</scope>
    <scope>BIOPHYSICOCHEMICAL PROPERTIES</scope>
    <scope>SUBUNIT</scope>
    <source>
        <strain>Tu 1892</strain>
    </source>
</reference>
<reference key="3">
    <citation type="journal article" date="1999" name="Eur. J. Biochem.">
        <title>Biosynthesis of ansatrienin (mycotrienin) and naphthomycin. Identification and analysis of two separate biosynthetic gene clusters in Streptomyces collinus Tue 1892.</title>
        <authorList>
            <person name="Chen S."/>
            <person name="von Bamberg D."/>
            <person name="Hale V."/>
            <person name="Breuer M."/>
            <person name="Hardt B."/>
            <person name="Mueller R."/>
            <person name="Floss H.G."/>
            <person name="Reynolds K.A."/>
            <person name="Leistner E."/>
        </authorList>
    </citation>
    <scope>PATHWAY</scope>
    <scope>GENE CLUSTER</scope>
    <source>
        <strain>Tu 1892</strain>
    </source>
</reference>
<reference key="4">
    <citation type="journal article" date="2000" name="Nat. Biotechnol.">
        <title>Identification of a cyclohexylcarbonyl CoA biosynthetic gene cluster and application in the production of doramectin.</title>
        <authorList>
            <person name="Cropp T.A."/>
            <person name="Wilson D.J."/>
            <person name="Reynolds K.A."/>
        </authorList>
    </citation>
    <scope>FUNCTION</scope>
    <scope>CATALYTIC ACTIVITY</scope>
</reference>